<organism>
    <name type="scientific">Rhodopseudomonas palustris (strain ATCC BAA-98 / CGA009)</name>
    <dbReference type="NCBI Taxonomy" id="258594"/>
    <lineage>
        <taxon>Bacteria</taxon>
        <taxon>Pseudomonadati</taxon>
        <taxon>Pseudomonadota</taxon>
        <taxon>Alphaproteobacteria</taxon>
        <taxon>Hyphomicrobiales</taxon>
        <taxon>Nitrobacteraceae</taxon>
        <taxon>Rhodopseudomonas</taxon>
    </lineage>
</organism>
<evidence type="ECO:0000255" key="1">
    <source>
        <dbReference type="HAMAP-Rule" id="MF_01161"/>
    </source>
</evidence>
<protein>
    <recommendedName>
        <fullName evidence="1">tRNA(Ile)-lysidine synthase</fullName>
        <ecNumber evidence="1">6.3.4.19</ecNumber>
    </recommendedName>
    <alternativeName>
        <fullName evidence="1">tRNA(Ile)-2-lysyl-cytidine synthase</fullName>
    </alternativeName>
    <alternativeName>
        <fullName evidence="1">tRNA(Ile)-lysidine synthetase</fullName>
    </alternativeName>
</protein>
<reference key="1">
    <citation type="journal article" date="2004" name="Nat. Biotechnol.">
        <title>Complete genome sequence of the metabolically versatile photosynthetic bacterium Rhodopseudomonas palustris.</title>
        <authorList>
            <person name="Larimer F.W."/>
            <person name="Chain P."/>
            <person name="Hauser L."/>
            <person name="Lamerdin J.E."/>
            <person name="Malfatti S."/>
            <person name="Do L."/>
            <person name="Land M.L."/>
            <person name="Pelletier D.A."/>
            <person name="Beatty J.T."/>
            <person name="Lang A.S."/>
            <person name="Tabita F.R."/>
            <person name="Gibson J.L."/>
            <person name="Hanson T.E."/>
            <person name="Bobst C."/>
            <person name="Torres y Torres J.L."/>
            <person name="Peres C."/>
            <person name="Harrison F.H."/>
            <person name="Gibson J."/>
            <person name="Harwood C.S."/>
        </authorList>
    </citation>
    <scope>NUCLEOTIDE SEQUENCE [LARGE SCALE GENOMIC DNA]</scope>
    <source>
        <strain>ATCC BAA-98 / CGA009</strain>
    </source>
</reference>
<keyword id="KW-0067">ATP-binding</keyword>
<keyword id="KW-0963">Cytoplasm</keyword>
<keyword id="KW-0436">Ligase</keyword>
<keyword id="KW-0547">Nucleotide-binding</keyword>
<keyword id="KW-0819">tRNA processing</keyword>
<comment type="function">
    <text evidence="1">Ligates lysine onto the cytidine present at position 34 of the AUA codon-specific tRNA(Ile) that contains the anticodon CAU, in an ATP-dependent manner. Cytidine is converted to lysidine, thus changing the amino acid specificity of the tRNA from methionine to isoleucine.</text>
</comment>
<comment type="catalytic activity">
    <reaction evidence="1">
        <text>cytidine(34) in tRNA(Ile2) + L-lysine + ATP = lysidine(34) in tRNA(Ile2) + AMP + diphosphate + H(+)</text>
        <dbReference type="Rhea" id="RHEA:43744"/>
        <dbReference type="Rhea" id="RHEA-COMP:10625"/>
        <dbReference type="Rhea" id="RHEA-COMP:10670"/>
        <dbReference type="ChEBI" id="CHEBI:15378"/>
        <dbReference type="ChEBI" id="CHEBI:30616"/>
        <dbReference type="ChEBI" id="CHEBI:32551"/>
        <dbReference type="ChEBI" id="CHEBI:33019"/>
        <dbReference type="ChEBI" id="CHEBI:82748"/>
        <dbReference type="ChEBI" id="CHEBI:83665"/>
        <dbReference type="ChEBI" id="CHEBI:456215"/>
        <dbReference type="EC" id="6.3.4.19"/>
    </reaction>
</comment>
<comment type="subcellular location">
    <subcellularLocation>
        <location evidence="1">Cytoplasm</location>
    </subcellularLocation>
</comment>
<comment type="domain">
    <text>The N-terminal region contains the highly conserved SGGXDS motif, predicted to be a P-loop motif involved in ATP binding.</text>
</comment>
<comment type="similarity">
    <text evidence="1">Belongs to the tRNA(Ile)-lysidine synthase family.</text>
</comment>
<dbReference type="EC" id="6.3.4.19" evidence="1"/>
<dbReference type="EMBL" id="BX572596">
    <property type="protein sequence ID" value="CAE26568.1"/>
    <property type="molecule type" value="Genomic_DNA"/>
</dbReference>
<dbReference type="RefSeq" id="WP_011156689.1">
    <property type="nucleotide sequence ID" value="NZ_CP116810.1"/>
</dbReference>
<dbReference type="SMR" id="Q6NAQ6"/>
<dbReference type="STRING" id="258594.RPA1125"/>
<dbReference type="GeneID" id="66892146"/>
<dbReference type="eggNOG" id="COG0037">
    <property type="taxonomic scope" value="Bacteria"/>
</dbReference>
<dbReference type="HOGENOM" id="CLU_018869_3_2_5"/>
<dbReference type="PhylomeDB" id="Q6NAQ6"/>
<dbReference type="GO" id="GO:0005737">
    <property type="term" value="C:cytoplasm"/>
    <property type="evidence" value="ECO:0007669"/>
    <property type="project" value="UniProtKB-SubCell"/>
</dbReference>
<dbReference type="GO" id="GO:0005524">
    <property type="term" value="F:ATP binding"/>
    <property type="evidence" value="ECO:0007669"/>
    <property type="project" value="UniProtKB-UniRule"/>
</dbReference>
<dbReference type="GO" id="GO:0032267">
    <property type="term" value="F:tRNA(Ile)-lysidine synthase activity"/>
    <property type="evidence" value="ECO:0007669"/>
    <property type="project" value="UniProtKB-EC"/>
</dbReference>
<dbReference type="GO" id="GO:0006400">
    <property type="term" value="P:tRNA modification"/>
    <property type="evidence" value="ECO:0007669"/>
    <property type="project" value="UniProtKB-UniRule"/>
</dbReference>
<dbReference type="CDD" id="cd01992">
    <property type="entry name" value="TilS_N"/>
    <property type="match status" value="1"/>
</dbReference>
<dbReference type="Gene3D" id="3.40.50.620">
    <property type="entry name" value="HUPs"/>
    <property type="match status" value="1"/>
</dbReference>
<dbReference type="HAMAP" id="MF_01161">
    <property type="entry name" value="tRNA_Ile_lys_synt"/>
    <property type="match status" value="1"/>
</dbReference>
<dbReference type="InterPro" id="IPR014729">
    <property type="entry name" value="Rossmann-like_a/b/a_fold"/>
</dbReference>
<dbReference type="InterPro" id="IPR011063">
    <property type="entry name" value="TilS/TtcA_N"/>
</dbReference>
<dbReference type="InterPro" id="IPR012094">
    <property type="entry name" value="tRNA_Ile_lys_synt"/>
</dbReference>
<dbReference type="InterPro" id="IPR012795">
    <property type="entry name" value="tRNA_Ile_lys_synt_N"/>
</dbReference>
<dbReference type="NCBIfam" id="TIGR02432">
    <property type="entry name" value="lysidine_TilS_N"/>
    <property type="match status" value="1"/>
</dbReference>
<dbReference type="PANTHER" id="PTHR43033">
    <property type="entry name" value="TRNA(ILE)-LYSIDINE SYNTHASE-RELATED"/>
    <property type="match status" value="1"/>
</dbReference>
<dbReference type="PANTHER" id="PTHR43033:SF1">
    <property type="entry name" value="TRNA(ILE)-LYSIDINE SYNTHASE-RELATED"/>
    <property type="match status" value="1"/>
</dbReference>
<dbReference type="Pfam" id="PF01171">
    <property type="entry name" value="ATP_bind_3"/>
    <property type="match status" value="1"/>
</dbReference>
<dbReference type="SUPFAM" id="SSF52402">
    <property type="entry name" value="Adenine nucleotide alpha hydrolases-like"/>
    <property type="match status" value="1"/>
</dbReference>
<name>TILS_RHOPA</name>
<gene>
    <name evidence="1" type="primary">tilS</name>
    <name type="ordered locus">RPA1125</name>
</gene>
<accession>Q6NAQ6</accession>
<proteinExistence type="inferred from homology"/>
<sequence>MSGTDHEAVSATEARRLFADWKAAPAIVLAVSGGPDSLALMWLAARWRKALKRGPALAVVTVDHGLRPEAAAEARAVKRLAASLDLPHRTLRWSGDKPSTGIQAAARGARYRLLAKAAKTLGASHVMTAHTRDDQAETVLMRLSRGSGIAGLAAMAREIERDGVVLARPLLDVPKARLIATLAKARIAFATDPSNADPRFTRPRLRELMPQLAAEGCDARSLVRLAVRAARADAALELMTDGAEQFLASLDAGSERPGVNARAFLGLAAEIQIRLLLRTLSRHGHEGPPELGKVEALAEALSQAAARRPQAAAKIRLKQTLAGAVISLTGDRLVIVPAPPRRGRVR</sequence>
<feature type="chain" id="PRO_0000181755" description="tRNA(Ile)-lysidine synthase">
    <location>
        <begin position="1"/>
        <end position="346"/>
    </location>
</feature>
<feature type="binding site" evidence="1">
    <location>
        <begin position="32"/>
        <end position="37"/>
    </location>
    <ligand>
        <name>ATP</name>
        <dbReference type="ChEBI" id="CHEBI:30616"/>
    </ligand>
</feature>